<proteinExistence type="evidence at protein level"/>
<protein>
    <recommendedName>
        <fullName>Dual specificity testis-specific protein kinase 1</fullName>
        <ecNumber>2.7.12.1</ecNumber>
    </recommendedName>
    <alternativeName>
        <fullName>Testicular protein kinase 1</fullName>
    </alternativeName>
</protein>
<accession>Q63572</accession>
<comment type="function">
    <text evidence="1 2 5 6 9 11">Dual specificity protein kinase activity catalyzing autophosphorylation and phosphorylation of exogenous substrates on both serine/threonine and tyrosine residues (PubMed:10207045). Regulates the cellular cytoskeleton by enhancing actin stress fiber formation via phosphorylation of cofilin and by preventing microtubule breakdown via inhibition of TAOK1/MARKK kinase activity (PubMed:11555644, PubMed:18216281). Inhibits podocyte motility via regulation of actin cytoskeletal dynamics and phosphorylation of CFL1 (By similarity). Positively regulates integrin-mediated cell spreading, via phosphorylation of cofilin (By similarity). Suppresses ciliogenesis via multiple pathways; phosphorylation of CFL1, suppression of ciliary vesicle directional trafficking to the ciliary base, and by facilitating YAP1 nuclear localization where it acts as a transcriptional corepressor of the TEAD4 target genes AURKA and PLK1 (By similarity). Probably plays a central role at and after the meiotic phase of spermatogenesis (PubMed:8537404).</text>
</comment>
<comment type="catalytic activity">
    <reaction>
        <text>L-seryl-[protein] + ATP = O-phospho-L-seryl-[protein] + ADP + H(+)</text>
        <dbReference type="Rhea" id="RHEA:17989"/>
        <dbReference type="Rhea" id="RHEA-COMP:9863"/>
        <dbReference type="Rhea" id="RHEA-COMP:11604"/>
        <dbReference type="ChEBI" id="CHEBI:15378"/>
        <dbReference type="ChEBI" id="CHEBI:29999"/>
        <dbReference type="ChEBI" id="CHEBI:30616"/>
        <dbReference type="ChEBI" id="CHEBI:83421"/>
        <dbReference type="ChEBI" id="CHEBI:456216"/>
        <dbReference type="EC" id="2.7.12.1"/>
    </reaction>
</comment>
<comment type="catalytic activity">
    <reaction>
        <text>L-threonyl-[protein] + ATP = O-phospho-L-threonyl-[protein] + ADP + H(+)</text>
        <dbReference type="Rhea" id="RHEA:46608"/>
        <dbReference type="Rhea" id="RHEA-COMP:11060"/>
        <dbReference type="Rhea" id="RHEA-COMP:11605"/>
        <dbReference type="ChEBI" id="CHEBI:15378"/>
        <dbReference type="ChEBI" id="CHEBI:30013"/>
        <dbReference type="ChEBI" id="CHEBI:30616"/>
        <dbReference type="ChEBI" id="CHEBI:61977"/>
        <dbReference type="ChEBI" id="CHEBI:456216"/>
        <dbReference type="EC" id="2.7.12.1"/>
    </reaction>
</comment>
<comment type="catalytic activity">
    <reaction>
        <text>L-tyrosyl-[protein] + ATP = O-phospho-L-tyrosyl-[protein] + ADP + H(+)</text>
        <dbReference type="Rhea" id="RHEA:10596"/>
        <dbReference type="Rhea" id="RHEA-COMP:10136"/>
        <dbReference type="Rhea" id="RHEA-COMP:20101"/>
        <dbReference type="ChEBI" id="CHEBI:15378"/>
        <dbReference type="ChEBI" id="CHEBI:30616"/>
        <dbReference type="ChEBI" id="CHEBI:46858"/>
        <dbReference type="ChEBI" id="CHEBI:61978"/>
        <dbReference type="ChEBI" id="CHEBI:456216"/>
        <dbReference type="EC" id="2.7.12.1"/>
    </reaction>
</comment>
<comment type="cofactor">
    <cofactor>
        <name>Mg(2+)</name>
        <dbReference type="ChEBI" id="CHEBI:18420"/>
    </cofactor>
</comment>
<comment type="cofactor">
    <cofactor>
        <name>Mn(2+)</name>
        <dbReference type="ChEBI" id="CHEBI:29035"/>
    </cofactor>
</comment>
<comment type="activity regulation">
    <text evidence="5 9">Activated by autophosphorylation on Ser-215. Kinase activity is inhibited by SPRED1.</text>
</comment>
<comment type="subunit">
    <text evidence="6 7 8 9">Interacts (via both C- and N-termini) with SPRY4 (via C-terminus); the interaction inhibits TESK1 kinase activity (PubMed:17974561). Interacts with TAOK1; the interaction inhibits TAOK1 kinase activity (PubMed:18216281). Interacts (via C-terminus) with SPRED1 (via C-terminus); the interaction inhibits TESK1 kinase activity (PubMed:17974561, PubMed:18216281). Interacts (via C-terminus) with PARVA/PARVIN (via C-terminus); the interaction inhibits TESK1 kinase activity (PubMed:15817463). Interacts with YWHAB/14-3-3 beta; the interaction is dependent on the phosphorylation of TESK1 Ser-439 and inhibits TESK1 kinase activity (PubMed:11555644). Interacts with SPRY1, SPRY3 and SPRED2 (PubMed:17974561). Interacts (via C-terminus) with SPRY2 (via C-terminus); the interaction disrupts SPRY2 interaction with PPP2CA/PP2A-C, possibly by vesicular sequestration of SPRY2 (PubMed:17974561). Therefore dephosphorylation of SPRY2 by the serine/threonine-protein phosphatase 2A (PP2A) holoenzyme is lost, inhibiting its interaction with GRB2 (PubMed:17974561).</text>
</comment>
<comment type="subcellular location">
    <subcellularLocation>
        <location evidence="10">Cytoplasm</location>
    </subcellularLocation>
    <subcellularLocation>
        <location evidence="10">Cytoplasm</location>
        <location evidence="10">Perinuclear region</location>
    </subcellularLocation>
    <subcellularLocation>
        <location evidence="2">Cytoplasm</location>
        <location evidence="2">Cytoskeleton</location>
        <location evidence="2">Microtubule organizing center</location>
        <location evidence="2">Centrosome</location>
    </subcellularLocation>
    <subcellularLocation>
        <location evidence="10">Cell projection</location>
        <location evidence="10">Lamellipodium</location>
    </subcellularLocation>
    <text evidence="2 10">Colocalizes with SPRY4 in vesicular spots in the cytoplasm (By similarity). Localized to F-actin-rich lamellipodia at the cell periphery following fibronectin-mediated cell adhesion of Schwann cells (PubMed:22302232).</text>
</comment>
<comment type="tissue specificity">
    <text evidence="5 10 11">Weakly expressed in sciatic nerves (at protein level) (PubMed:22302232). Highly expressed in testicular germ cells (PubMed:10207045, PubMed:8537404). Expressed at low levels in brain, lung, heart, liver and kidney (PubMed:10207045).</text>
</comment>
<comment type="induction">
    <text evidence="10">Induced by fibronectin-mediated cell adhesion of Schwann cells (PubMed:22302232). Induced by sciatic nerve crush injury, expression peaks 2 weeks post-injury and returns to normal at 4 weeks post-injury in the macrophages of promyelinating Schwann tubules (PubMed:22302232).</text>
</comment>
<comment type="domain">
    <text>The extracatalytic C-terminal part is highly rich in proline residues.</text>
</comment>
<comment type="PTM">
    <text evidence="5">Autophosphorylated on serine and tyrosine residues.</text>
</comment>
<comment type="similarity">
    <text evidence="12">Belongs to the protein kinase superfamily. TKL Ser/Thr protein kinase family.</text>
</comment>
<dbReference type="EC" id="2.7.12.1"/>
<dbReference type="EMBL" id="D50864">
    <property type="protein sequence ID" value="BAA09460.1"/>
    <property type="molecule type" value="mRNA"/>
</dbReference>
<dbReference type="EMBL" id="BC081773">
    <property type="protein sequence ID" value="AAH81773.1"/>
    <property type="molecule type" value="mRNA"/>
</dbReference>
<dbReference type="RefSeq" id="NP_113766.1">
    <property type="nucleotide sequence ID" value="NM_031578.2"/>
</dbReference>
<dbReference type="SMR" id="Q63572"/>
<dbReference type="FunCoup" id="Q63572">
    <property type="interactions" value="1557"/>
</dbReference>
<dbReference type="MINT" id="Q63572"/>
<dbReference type="STRING" id="10116.ENSRNOP00000071965"/>
<dbReference type="GlyGen" id="Q63572">
    <property type="glycosylation" value="2 sites"/>
</dbReference>
<dbReference type="iPTMnet" id="Q63572"/>
<dbReference type="PhosphoSitePlus" id="Q63572"/>
<dbReference type="PaxDb" id="10116-ENSRNOP00000023694"/>
<dbReference type="Ensembl" id="ENSRNOT00000080909.2">
    <property type="protein sequence ID" value="ENSRNOP00000071965.1"/>
    <property type="gene ID" value="ENSRNOG00000053729.2"/>
</dbReference>
<dbReference type="GeneID" id="29460"/>
<dbReference type="KEGG" id="rno:29460"/>
<dbReference type="UCSC" id="RGD:62059">
    <property type="organism name" value="rat"/>
</dbReference>
<dbReference type="AGR" id="RGD:62059"/>
<dbReference type="CTD" id="7016"/>
<dbReference type="RGD" id="62059">
    <property type="gene designation" value="Tesk1"/>
</dbReference>
<dbReference type="eggNOG" id="ENOG502QTCP">
    <property type="taxonomic scope" value="Eukaryota"/>
</dbReference>
<dbReference type="GeneTree" id="ENSGT00940000157807"/>
<dbReference type="HOGENOM" id="CLU_018577_0_0_1"/>
<dbReference type="InParanoid" id="Q63572"/>
<dbReference type="OMA" id="SPPTWGD"/>
<dbReference type="OrthoDB" id="20134at2759"/>
<dbReference type="PhylomeDB" id="Q63572"/>
<dbReference type="TreeFam" id="TF318014"/>
<dbReference type="BRENDA" id="2.7.10.2">
    <property type="organism ID" value="5301"/>
</dbReference>
<dbReference type="Reactome" id="R-RNO-446388">
    <property type="pathway name" value="Regulation of cytoskeletal remodeling and cell spreading by IPP complex components"/>
</dbReference>
<dbReference type="PRO" id="PR:Q63572"/>
<dbReference type="Proteomes" id="UP000002494">
    <property type="component" value="Chromosome 5"/>
</dbReference>
<dbReference type="Bgee" id="ENSRNOG00000053729">
    <property type="expression patterns" value="Expressed in testis and 19 other cell types or tissues"/>
</dbReference>
<dbReference type="GO" id="GO:0005813">
    <property type="term" value="C:centrosome"/>
    <property type="evidence" value="ECO:0000250"/>
    <property type="project" value="UniProtKB"/>
</dbReference>
<dbReference type="GO" id="GO:0005737">
    <property type="term" value="C:cytoplasm"/>
    <property type="evidence" value="ECO:0000314"/>
    <property type="project" value="UniProtKB"/>
</dbReference>
<dbReference type="GO" id="GO:0030027">
    <property type="term" value="C:lamellipodium"/>
    <property type="evidence" value="ECO:0007669"/>
    <property type="project" value="UniProtKB-SubCell"/>
</dbReference>
<dbReference type="GO" id="GO:0005634">
    <property type="term" value="C:nucleus"/>
    <property type="evidence" value="ECO:0000318"/>
    <property type="project" value="GO_Central"/>
</dbReference>
<dbReference type="GO" id="GO:0048471">
    <property type="term" value="C:perinuclear region of cytoplasm"/>
    <property type="evidence" value="ECO:0000314"/>
    <property type="project" value="UniProtKB"/>
</dbReference>
<dbReference type="GO" id="GO:0005524">
    <property type="term" value="F:ATP binding"/>
    <property type="evidence" value="ECO:0007669"/>
    <property type="project" value="UniProtKB-KW"/>
</dbReference>
<dbReference type="GO" id="GO:0046872">
    <property type="term" value="F:metal ion binding"/>
    <property type="evidence" value="ECO:0007669"/>
    <property type="project" value="UniProtKB-KW"/>
</dbReference>
<dbReference type="GO" id="GO:0004672">
    <property type="term" value="F:protein kinase activity"/>
    <property type="evidence" value="ECO:0000314"/>
    <property type="project" value="UniProtKB"/>
</dbReference>
<dbReference type="GO" id="GO:0019901">
    <property type="term" value="F:protein kinase binding"/>
    <property type="evidence" value="ECO:0000353"/>
    <property type="project" value="ARUK-UCL"/>
</dbReference>
<dbReference type="GO" id="GO:0106310">
    <property type="term" value="F:protein serine kinase activity"/>
    <property type="evidence" value="ECO:0007669"/>
    <property type="project" value="RHEA"/>
</dbReference>
<dbReference type="GO" id="GO:0004674">
    <property type="term" value="F:protein serine/threonine kinase activity"/>
    <property type="evidence" value="ECO:0000315"/>
    <property type="project" value="RGD"/>
</dbReference>
<dbReference type="GO" id="GO:0030291">
    <property type="term" value="F:protein serine/threonine kinase inhibitor activity"/>
    <property type="evidence" value="ECO:0000314"/>
    <property type="project" value="ARUK-UCL"/>
</dbReference>
<dbReference type="GO" id="GO:0004712">
    <property type="term" value="F:protein serine/threonine/tyrosine kinase activity"/>
    <property type="evidence" value="ECO:0007669"/>
    <property type="project" value="UniProtKB-EC"/>
</dbReference>
<dbReference type="GO" id="GO:0004713">
    <property type="term" value="F:protein tyrosine kinase activity"/>
    <property type="evidence" value="ECO:0007669"/>
    <property type="project" value="UniProtKB-KW"/>
</dbReference>
<dbReference type="GO" id="GO:0030036">
    <property type="term" value="P:actin cytoskeleton organization"/>
    <property type="evidence" value="ECO:0000318"/>
    <property type="project" value="GO_Central"/>
</dbReference>
<dbReference type="GO" id="GO:0051650">
    <property type="term" value="P:establishment of vesicle localization"/>
    <property type="evidence" value="ECO:0000250"/>
    <property type="project" value="UniProtKB"/>
</dbReference>
<dbReference type="GO" id="GO:1902018">
    <property type="term" value="P:negative regulation of cilium assembly"/>
    <property type="evidence" value="ECO:0000250"/>
    <property type="project" value="UniProtKB"/>
</dbReference>
<dbReference type="GO" id="GO:0070966">
    <property type="term" value="P:nuclear-transcribed mRNA catabolic process, no-go decay"/>
    <property type="evidence" value="ECO:0000250"/>
    <property type="project" value="UniProtKB"/>
</dbReference>
<dbReference type="GO" id="GO:0090521">
    <property type="term" value="P:podocyte cell migration"/>
    <property type="evidence" value="ECO:0000250"/>
    <property type="project" value="UniProtKB"/>
</dbReference>
<dbReference type="GO" id="GO:1900182">
    <property type="term" value="P:positive regulation of protein localization to nucleus"/>
    <property type="evidence" value="ECO:0000250"/>
    <property type="project" value="UniProtKB"/>
</dbReference>
<dbReference type="GO" id="GO:0051496">
    <property type="term" value="P:positive regulation of stress fiber assembly"/>
    <property type="evidence" value="ECO:0000314"/>
    <property type="project" value="ARUK-UCL"/>
</dbReference>
<dbReference type="GO" id="GO:1900026">
    <property type="term" value="P:positive regulation of substrate adhesion-dependent cell spreading"/>
    <property type="evidence" value="ECO:0000250"/>
    <property type="project" value="UniProtKB"/>
</dbReference>
<dbReference type="GO" id="GO:0032956">
    <property type="term" value="P:regulation of actin cytoskeleton organization"/>
    <property type="evidence" value="ECO:0000266"/>
    <property type="project" value="RGD"/>
</dbReference>
<dbReference type="GO" id="GO:0032880">
    <property type="term" value="P:regulation of protein localization"/>
    <property type="evidence" value="ECO:0000314"/>
    <property type="project" value="ARUK-UCL"/>
</dbReference>
<dbReference type="GO" id="GO:0007283">
    <property type="term" value="P:spermatogenesis"/>
    <property type="evidence" value="ECO:0000270"/>
    <property type="project" value="RGD"/>
</dbReference>
<dbReference type="CDD" id="cd14155">
    <property type="entry name" value="PKc_TESK"/>
    <property type="match status" value="1"/>
</dbReference>
<dbReference type="FunFam" id="1.10.510.10:FF:000202">
    <property type="entry name" value="Dual specificity testis-specific protein kinase 2"/>
    <property type="match status" value="1"/>
</dbReference>
<dbReference type="FunFam" id="3.30.200.20:FF:000134">
    <property type="entry name" value="Dual specificity testis-specific protein kinase 2"/>
    <property type="match status" value="1"/>
</dbReference>
<dbReference type="Gene3D" id="3.30.200.20">
    <property type="entry name" value="Phosphorylase Kinase, domain 1"/>
    <property type="match status" value="1"/>
</dbReference>
<dbReference type="Gene3D" id="1.10.510.10">
    <property type="entry name" value="Transferase(Phosphotransferase) domain 1"/>
    <property type="match status" value="1"/>
</dbReference>
<dbReference type="InterPro" id="IPR050940">
    <property type="entry name" value="Actin_reg-Ser/Thr_kinase"/>
</dbReference>
<dbReference type="InterPro" id="IPR011009">
    <property type="entry name" value="Kinase-like_dom_sf"/>
</dbReference>
<dbReference type="InterPro" id="IPR000719">
    <property type="entry name" value="Prot_kinase_dom"/>
</dbReference>
<dbReference type="InterPro" id="IPR017441">
    <property type="entry name" value="Protein_kinase_ATP_BS"/>
</dbReference>
<dbReference type="InterPro" id="IPR001245">
    <property type="entry name" value="Ser-Thr/Tyr_kinase_cat_dom"/>
</dbReference>
<dbReference type="InterPro" id="IPR008266">
    <property type="entry name" value="Tyr_kinase_AS"/>
</dbReference>
<dbReference type="PANTHER" id="PTHR46485:SF3">
    <property type="entry name" value="DUAL SPECIFICITY TESTIS-SPECIFIC PROTEIN KINASE 1"/>
    <property type="match status" value="1"/>
</dbReference>
<dbReference type="PANTHER" id="PTHR46485">
    <property type="entry name" value="LIM DOMAIN KINASE 1"/>
    <property type="match status" value="1"/>
</dbReference>
<dbReference type="Pfam" id="PF07714">
    <property type="entry name" value="PK_Tyr_Ser-Thr"/>
    <property type="match status" value="1"/>
</dbReference>
<dbReference type="PRINTS" id="PR00109">
    <property type="entry name" value="TYRKINASE"/>
</dbReference>
<dbReference type="SUPFAM" id="SSF56112">
    <property type="entry name" value="Protein kinase-like (PK-like)"/>
    <property type="match status" value="1"/>
</dbReference>
<dbReference type="PROSITE" id="PS00107">
    <property type="entry name" value="PROTEIN_KINASE_ATP"/>
    <property type="match status" value="1"/>
</dbReference>
<dbReference type="PROSITE" id="PS50011">
    <property type="entry name" value="PROTEIN_KINASE_DOM"/>
    <property type="match status" value="1"/>
</dbReference>
<dbReference type="PROSITE" id="PS00109">
    <property type="entry name" value="PROTEIN_KINASE_TYR"/>
    <property type="match status" value="1"/>
</dbReference>
<gene>
    <name type="primary">Tesk1</name>
</gene>
<organism>
    <name type="scientific">Rattus norvegicus</name>
    <name type="common">Rat</name>
    <dbReference type="NCBI Taxonomy" id="10116"/>
    <lineage>
        <taxon>Eukaryota</taxon>
        <taxon>Metazoa</taxon>
        <taxon>Chordata</taxon>
        <taxon>Craniata</taxon>
        <taxon>Vertebrata</taxon>
        <taxon>Euteleostomi</taxon>
        <taxon>Mammalia</taxon>
        <taxon>Eutheria</taxon>
        <taxon>Euarchontoglires</taxon>
        <taxon>Glires</taxon>
        <taxon>Rodentia</taxon>
        <taxon>Myomorpha</taxon>
        <taxon>Muroidea</taxon>
        <taxon>Muridae</taxon>
        <taxon>Murinae</taxon>
        <taxon>Rattus</taxon>
    </lineage>
</organism>
<feature type="chain" id="PRO_0000086748" description="Dual specificity testis-specific protein kinase 1">
    <location>
        <begin position="1"/>
        <end position="628"/>
    </location>
</feature>
<feature type="domain" description="Protein kinase" evidence="3">
    <location>
        <begin position="52"/>
        <end position="310"/>
    </location>
</feature>
<feature type="region of interest" description="Disordered" evidence="4">
    <location>
        <begin position="1"/>
        <end position="35"/>
    </location>
</feature>
<feature type="region of interest" description="Disordered" evidence="4">
    <location>
        <begin position="330"/>
        <end position="376"/>
    </location>
</feature>
<feature type="region of interest" description="Required for interaction with YWHAB" evidence="6">
    <location>
        <begin position="421"/>
        <end position="526"/>
    </location>
</feature>
<feature type="region of interest" description="Disordered" evidence="4">
    <location>
        <begin position="424"/>
        <end position="490"/>
    </location>
</feature>
<feature type="region of interest" description="Required for interaction with SPRED1 and SPRY2. Required for TESK1-mediated dephosphorylation of SPRY2 and SPRY2 inhibition of ERK phosphorylation" evidence="8">
    <location>
        <begin position="529"/>
        <end position="628"/>
    </location>
</feature>
<feature type="region of interest" description="Required for interaction with PARVA" evidence="7">
    <location>
        <begin position="529"/>
        <end position="626"/>
    </location>
</feature>
<feature type="region of interest" description="Disordered" evidence="4">
    <location>
        <begin position="538"/>
        <end position="568"/>
    </location>
</feature>
<feature type="compositionally biased region" description="Gly residues" evidence="4">
    <location>
        <begin position="20"/>
        <end position="30"/>
    </location>
</feature>
<feature type="compositionally biased region" description="Basic and acidic residues" evidence="4">
    <location>
        <begin position="348"/>
        <end position="357"/>
    </location>
</feature>
<feature type="compositionally biased region" description="Pro residues" evidence="4">
    <location>
        <begin position="478"/>
        <end position="487"/>
    </location>
</feature>
<feature type="active site" description="Proton acceptor">
    <location>
        <position position="170"/>
    </location>
</feature>
<feature type="binding site" evidence="3">
    <location>
        <begin position="58"/>
        <end position="66"/>
    </location>
    <ligand>
        <name>ATP</name>
        <dbReference type="ChEBI" id="CHEBI:30616"/>
    </ligand>
</feature>
<feature type="binding site" evidence="3">
    <location>
        <position position="81"/>
    </location>
    <ligand>
        <name>ATP</name>
        <dbReference type="ChEBI" id="CHEBI:30616"/>
    </ligand>
</feature>
<feature type="modified residue" description="Phosphoserine; by autocatalysis" evidence="5">
    <location>
        <position position="215"/>
    </location>
</feature>
<feature type="modified residue" description="Omega-N-methylarginine" evidence="1">
    <location>
        <position position="338"/>
    </location>
</feature>
<feature type="modified residue" description="Phosphoserine" evidence="6">
    <location>
        <position position="439"/>
    </location>
</feature>
<feature type="mutagenesis site" description="Loss of kinase and autophosphorylating activity. Abolishes TESK1-induced actin stress fiber formation. No effect on interaction with YWHAB, SPRY2 or SPRED1. No effect on TESK1-mediated dephosphorylation of SPRY2." evidence="5 6 8 9">
    <original>D</original>
    <variation>A</variation>
    <location>
        <position position="170"/>
    </location>
</feature>
<feature type="mutagenesis site" description="No effect on autophosphorylation." evidence="5">
    <original>Y</original>
    <variation>A</variation>
    <location>
        <position position="201"/>
    </location>
</feature>
<feature type="mutagenesis site" description="Loss of autophosphorylation site, loss of kinase activity." evidence="5">
    <original>S</original>
    <variation>A</variation>
    <location>
        <position position="215"/>
    </location>
</feature>
<feature type="mutagenesis site" description="Loss of autophosphorylation site, no effect on kinase activity." evidence="5">
    <original>S</original>
    <variation>E</variation>
    <location>
        <position position="215"/>
    </location>
</feature>
<feature type="mutagenesis site" description="No effect on autophosphorylation." evidence="5">
    <original>Y</original>
    <variation>A</variation>
    <location>
        <position position="217"/>
    </location>
</feature>
<feature type="mutagenesis site" description="Abolishes interaction with YWHAB." evidence="6">
    <original>S</original>
    <variation>A</variation>
    <location>
        <position position="439"/>
    </location>
</feature>
<name>TESK1_RAT</name>
<keyword id="KW-0067">ATP-binding</keyword>
<keyword id="KW-0966">Cell projection</keyword>
<keyword id="KW-0963">Cytoplasm</keyword>
<keyword id="KW-0206">Cytoskeleton</keyword>
<keyword id="KW-0418">Kinase</keyword>
<keyword id="KW-0460">Magnesium</keyword>
<keyword id="KW-0464">Manganese</keyword>
<keyword id="KW-0479">Metal-binding</keyword>
<keyword id="KW-0488">Methylation</keyword>
<keyword id="KW-0547">Nucleotide-binding</keyword>
<keyword id="KW-0597">Phosphoprotein</keyword>
<keyword id="KW-1185">Reference proteome</keyword>
<keyword id="KW-0723">Serine/threonine-protein kinase</keyword>
<keyword id="KW-0808">Transferase</keyword>
<keyword id="KW-0829">Tyrosine-protein kinase</keyword>
<reference key="1">
    <citation type="journal article" date="1995" name="J. Biol. Chem.">
        <title>Identification and characterization of a novel protein kinase, TESK1, specifically expressed in testicular germ cells.</title>
        <authorList>
            <person name="Toshima J."/>
            <person name="Ohashi K."/>
            <person name="Okano I."/>
            <person name="Nunoue K."/>
            <person name="Kishioka M."/>
            <person name="Kuma K."/>
            <person name="Miyata T."/>
            <person name="Hirai M."/>
            <person name="Baba T."/>
            <person name="Mizuno K."/>
        </authorList>
    </citation>
    <scope>NUCLEOTIDE SEQUENCE [MRNA]</scope>
    <scope>FUNCTION</scope>
    <scope>TISSUE SPECIFICITY</scope>
    <source>
        <strain>Wistar</strain>
        <tissue>Testis</tissue>
    </source>
</reference>
<reference key="2">
    <citation type="journal article" date="2004" name="Genome Res.">
        <title>The status, quality, and expansion of the NIH full-length cDNA project: the Mammalian Gene Collection (MGC).</title>
        <authorList>
            <consortium name="The MGC Project Team"/>
        </authorList>
    </citation>
    <scope>NUCLEOTIDE SEQUENCE [LARGE SCALE MRNA]</scope>
    <source>
        <tissue>Testis</tissue>
    </source>
</reference>
<reference key="3">
    <citation type="journal article" date="1999" name="J. Biol. Chem.">
        <title>Dual specificity protein kinase activity of testis-specific protein kinase 1 and its regulation by autophosphorylation of serine-215 within the activation loop.</title>
        <authorList>
            <person name="Toshima J."/>
            <person name="Tanaka T."/>
            <person name="Mizuno K."/>
        </authorList>
    </citation>
    <scope>FUNCTION</scope>
    <scope>TISSUE SPECIFICITY</scope>
    <scope>PHOSPHORYLATION AT SER-215</scope>
    <scope>ACTIVITY REGULATION</scope>
    <scope>MUTAGENESIS OF ASP-170; TYR-201; SER-215 AND TYR-217</scope>
</reference>
<reference key="4">
    <citation type="journal article" date="2001" name="J. Biol. Chem.">
        <title>Binding of 14-3-3beta regulates the kinase activity and subcellular localization of testicular protein kinase 1.</title>
        <authorList>
            <person name="Toshima J.Y."/>
            <person name="Toshima J."/>
            <person name="Watanabe T."/>
            <person name="Mizuno K."/>
        </authorList>
    </citation>
    <scope>FUNCTION</scope>
    <scope>INTERACTION WITH YWHAB</scope>
    <scope>PHOSPHORYLATION AT SER-439</scope>
    <scope>MUTAGENESIS OF ASP-170 AND SER-439</scope>
</reference>
<reference key="5">
    <citation type="journal article" date="2005" name="J. Biol. Chem.">
        <title>Actopaxin interacts with TESK1 to regulate cell spreading on fibronectin.</title>
        <authorList>
            <person name="LaLonde D.P."/>
            <person name="Brown M.C."/>
            <person name="Bouverat B.P."/>
            <person name="Turner C.E."/>
        </authorList>
    </citation>
    <scope>INTERACTION WITH PARVA</scope>
</reference>
<reference key="6">
    <citation type="journal article" date="2008" name="J. Biol. Chem.">
        <title>Tesk1 interacts with Spry2 to abrogate its inhibition of ERK phosphorylation downstream of receptor tyrosine kinase signaling.</title>
        <authorList>
            <person name="Chandramouli S."/>
            <person name="Yu C.Y."/>
            <person name="Yusoff P."/>
            <person name="Lao D.H."/>
            <person name="Leong H.F."/>
            <person name="Mizuno K."/>
            <person name="Guy G.R."/>
        </authorList>
    </citation>
    <scope>INTERACTION WITH SPRED1; SPRY1; SPRY2; SPRY3; SPRY4 AND SPRED2</scope>
    <scope>MUTAGENESIS OF ASP-170</scope>
</reference>
<reference key="7">
    <citation type="journal article" date="2008" name="Mol. Biol. Cell">
        <title>Spred1 and TESK1--two new interaction partners of the kinase MARKK/TAO1 that link the microtubule and actin cytoskeleton.</title>
        <authorList>
            <person name="Johne C."/>
            <person name="Matenia D."/>
            <person name="Li X.Y."/>
            <person name="Timm T."/>
            <person name="Balusamy K."/>
            <person name="Mandelkow E.M."/>
        </authorList>
    </citation>
    <scope>FUNCTION</scope>
    <scope>ACTIVITY REGULATION</scope>
    <scope>INTERACTION WITH TAOK1 AND SPRED1</scope>
    <scope>MUTAGENESIS OF ASP-170</scope>
</reference>
<reference key="8">
    <citation type="journal article" date="2012" name="J. Mol. Neurosci.">
        <title>Spatiotemporal expression of testicular protein kinase 1 after rat sciatic nerve injury.</title>
        <authorList>
            <person name="Lou D."/>
            <person name="Sun B."/>
            <person name="Wei H."/>
            <person name="Deng X."/>
            <person name="Chen H."/>
            <person name="Xu D."/>
            <person name="Li G."/>
            <person name="Xu H."/>
            <person name="Wang Y."/>
        </authorList>
    </citation>
    <scope>SUBCELLULAR LOCATION</scope>
    <scope>TISSUE SPECIFICITY</scope>
    <scope>INDUCTION BY CELL ADHESION AND SCIATIC NERVE CRUSH INJURY</scope>
</reference>
<evidence type="ECO:0000250" key="1">
    <source>
        <dbReference type="UniProtKB" id="O70146"/>
    </source>
</evidence>
<evidence type="ECO:0000250" key="2">
    <source>
        <dbReference type="UniProtKB" id="Q15569"/>
    </source>
</evidence>
<evidence type="ECO:0000255" key="3">
    <source>
        <dbReference type="PROSITE-ProRule" id="PRU00159"/>
    </source>
</evidence>
<evidence type="ECO:0000256" key="4">
    <source>
        <dbReference type="SAM" id="MobiDB-lite"/>
    </source>
</evidence>
<evidence type="ECO:0000269" key="5">
    <source>
    </source>
</evidence>
<evidence type="ECO:0000269" key="6">
    <source>
    </source>
</evidence>
<evidence type="ECO:0000269" key="7">
    <source>
    </source>
</evidence>
<evidence type="ECO:0000269" key="8">
    <source>
    </source>
</evidence>
<evidence type="ECO:0000269" key="9">
    <source>
    </source>
</evidence>
<evidence type="ECO:0000269" key="10">
    <source>
    </source>
</evidence>
<evidence type="ECO:0000269" key="11">
    <source>
    </source>
</evidence>
<evidence type="ECO:0000305" key="12"/>
<sequence>MAGERPPLRGPGPGETPVEGPGGAGGGPGRGRPSSYRALRSAVSSLARVDDFDCAEKIGAGFFSEVYKVRHRQSGQVMVLKMNKLPSNRSNTLREVQLMNRLRHPNILRFMGVCVHQGQLHALTEYMNGGTLEQLLSSPEPLSWPVRLHLALDIAQGLRYLHAKGVFHRDLTSKNCLVRREDGGFTAVVGDFGLAEKIPVYREGARKEPLAVVGSPYWMAPEVLRGELYDEKADVFAFGIVLCELIARVPADPDYLPRTEDFGLDVPAFRTLVGNDCPLPFLLLAIHCCSMEPSARAPFTEITQHLEQILEQLPEPTPLAKMPLAKAPLTYNQGSVPRGGPSATLPRSDPRLSRSRSDLFLPPSPESPPSWGDNLTRVNPFSLREDLRGGKIKLLDTPCKPATPLPLVPPSPLTSTQLPLVASPESLVQPETPVRRCRSLPSSPELPRRMETALPGPGPSPVGPSTEERMDCEGSSPEPEPPGPAPQLPLAVATDNFISTCSSASQPWSARPGPSLNNNPPAVVVNSPQGWAREPWNRAQHSLPRAAALERTEPSPPPSAPREQEEGLPCPGCCLSPFSFGFLSMCPRPTPAVARYRNLNCEAGSLLCHRGHHAKPPTPSLQLPGARS</sequence>